<name>PON1E_ANOEM</name>
<proteinExistence type="evidence at protein level"/>
<reference key="1">
    <citation type="journal article" date="2016" name="Biochim. Biophys. Acta">
        <title>Isolation and characterization of a structurally unique beta-hairpin venom peptide from the predatory ant Anochetus emarginatus.</title>
        <authorList>
            <person name="Touchard A."/>
            <person name="Brust A."/>
            <person name="Cardoso F."/>
            <person name="Chin Y.-K."/>
            <person name="Herzig V."/>
            <person name="Jin A.-H."/>
            <person name="Dejean A."/>
            <person name="Alewood P."/>
            <person name="King G."/>
            <person name="Orivel J."/>
            <person name="Escoubas P."/>
        </authorList>
    </citation>
    <scope>PROTEIN SEQUENCE</scope>
    <scope>SUBCELLULAR LOCATION</scope>
    <scope>MASS SPECTROMETRY</scope>
    <scope>AMIDATION AT GLY-18</scope>
    <scope>IDENTIFICATION BY MASS SPECTROMETRY</scope>
    <source>
        <tissue>Venom</tissue>
    </source>
</reference>
<evidence type="ECO:0000250" key="1">
    <source>
        <dbReference type="UniProtKB" id="C0HJY4"/>
    </source>
</evidence>
<evidence type="ECO:0000269" key="2">
    <source>
    </source>
</evidence>
<evidence type="ECO:0000303" key="3">
    <source>
    </source>
</evidence>
<evidence type="ECO:0000305" key="4"/>
<evidence type="ECO:0000305" key="5">
    <source>
    </source>
</evidence>
<dbReference type="GO" id="GO:0005576">
    <property type="term" value="C:extracellular region"/>
    <property type="evidence" value="ECO:0007669"/>
    <property type="project" value="UniProtKB-SubCell"/>
</dbReference>
<dbReference type="GO" id="GO:0090729">
    <property type="term" value="F:toxin activity"/>
    <property type="evidence" value="ECO:0007669"/>
    <property type="project" value="UniProtKB-KW"/>
</dbReference>
<comment type="subcellular location">
    <subcellularLocation>
        <location evidence="2">Secreted</location>
    </subcellularLocation>
</comment>
<comment type="tissue specificity">
    <text evidence="5">Expressed by the venom gland.</text>
</comment>
<comment type="mass spectrometry"/>
<comment type="similarity">
    <text evidence="4">Belongs to the poneritoxin-Ae1 family.</text>
</comment>
<feature type="peptide" id="PRO_0000437877" description="U1-poneritoxin-Ae1e" evidence="2">
    <location>
        <begin position="1"/>
        <end position="18"/>
    </location>
</feature>
<feature type="modified residue" description="Glycine amide" evidence="2">
    <location>
        <position position="18"/>
    </location>
</feature>
<feature type="disulfide bond" evidence="1">
    <location>
        <begin position="4"/>
        <end position="15"/>
    </location>
</feature>
<feature type="disulfide bond" evidence="1">
    <location>
        <begin position="8"/>
        <end position="17"/>
    </location>
</feature>
<organism>
    <name type="scientific">Anochetus emarginatus</name>
    <name type="common">Ant</name>
    <name type="synonym">Stenomyrmex emarginatus</name>
    <dbReference type="NCBI Taxonomy" id="486636"/>
    <lineage>
        <taxon>Eukaryota</taxon>
        <taxon>Metazoa</taxon>
        <taxon>Ecdysozoa</taxon>
        <taxon>Arthropoda</taxon>
        <taxon>Hexapoda</taxon>
        <taxon>Insecta</taxon>
        <taxon>Pterygota</taxon>
        <taxon>Neoptera</taxon>
        <taxon>Endopterygota</taxon>
        <taxon>Hymenoptera</taxon>
        <taxon>Apocrita</taxon>
        <taxon>Aculeata</taxon>
        <taxon>Formicoidea</taxon>
        <taxon>Formicidae</taxon>
        <taxon>Ponerinae</taxon>
        <taxon>Ponerini</taxon>
        <taxon>Anochetus</taxon>
    </lineage>
</organism>
<accession>C0HJY8</accession>
<sequence>GVGCSSGCHKVGGQCRCG</sequence>
<keyword id="KW-0027">Amidation</keyword>
<keyword id="KW-0903">Direct protein sequencing</keyword>
<keyword id="KW-1015">Disulfide bond</keyword>
<keyword id="KW-0964">Secreted</keyword>
<keyword id="KW-0800">Toxin</keyword>
<protein>
    <recommendedName>
        <fullName evidence="3">U1-poneritoxin-Ae1e</fullName>
        <shortName evidence="3">U1-PONTX-Ae1e</shortName>
    </recommendedName>
    <alternativeName>
        <fullName evidence="4">Poneratoxin</fullName>
    </alternativeName>
</protein>